<name>NODD2_BRASN</name>
<protein>
    <recommendedName>
        <fullName>Nodulation protein D 2</fullName>
    </recommendedName>
</protein>
<comment type="function">
    <text>NodD regulates the expression of the nodABCFE genes which encode other nodulation proteins. NodD is also a negative regulator of its own expression. Binds flavonoids as inducers.</text>
</comment>
<comment type="miscellaneous">
    <text>There are at least two nodD genes in B.sp strain NC92.</text>
</comment>
<comment type="similarity">
    <text evidence="2">Belongs to the LysR transcriptional regulatory family.</text>
</comment>
<accession>P50328</accession>
<gene>
    <name type="primary">nodD2</name>
</gene>
<reference key="1">
    <citation type="journal article" date="1996" name="J. Bacteriol.">
        <title>Bradyrhizobium (Arachis) sp. strain NC92 contains two nodD genes involved in the repression of nodA and a nolA gene required for the efficient nodulation of host plants.</title>
        <authorList>
            <person name="Gillette W.K."/>
            <person name="Elkan G.H."/>
        </authorList>
    </citation>
    <scope>NUCLEOTIDE SEQUENCE [GENOMIC DNA]</scope>
</reference>
<keyword id="KW-0010">Activator</keyword>
<keyword id="KW-0238">DNA-binding</keyword>
<keyword id="KW-0536">Nodulation</keyword>
<keyword id="KW-0678">Repressor</keyword>
<keyword id="KW-0804">Transcription</keyword>
<keyword id="KW-0805">Transcription regulation</keyword>
<organism>
    <name type="scientific">Bradyrhizobium sp. (strain NC92)</name>
    <dbReference type="NCBI Taxonomy" id="55395"/>
    <lineage>
        <taxon>Bacteria</taxon>
        <taxon>Pseudomonadati</taxon>
        <taxon>Pseudomonadota</taxon>
        <taxon>Alphaproteobacteria</taxon>
        <taxon>Hyphomicrobiales</taxon>
        <taxon>Nitrobacteraceae</taxon>
        <taxon>Bradyrhizobium</taxon>
    </lineage>
</organism>
<sequence>MRFKGLDLNLLVVLDSLMTARNLTAAARSINLSQPAMSAAVARLRAYFGDELFTMRGRTLVPTPRAESLASPVRKALLDIQLSIIARDKFNPAESCRRFRISLSDCVTLIFFRQIVDRVARDAPAVSFELLPLREDHDELLRRGEIDFLIMPEPFMSSAHPRAALFGERLVCAGCRTNKRLPHRLTFEEYMSLGQVAVRWNLAHNPSIEEQFLLQHGLKRRIDIVVQSFCMIPPMLSGTDRIGVMPLRLVKHFEKVTPLRIVDLPLSLPAFTEAVQWPAFHNADPASIWMREILLQESSRMGSWGEERQTVKSLLSSNLRSDPLCIKASQLAEPRSS</sequence>
<feature type="chain" id="PRO_0000105708" description="Nodulation protein D 2">
    <location>
        <begin position="1"/>
        <end position="337"/>
    </location>
</feature>
<feature type="domain" description="HTH lysR-type" evidence="1">
    <location>
        <begin position="6"/>
        <end position="63"/>
    </location>
</feature>
<feature type="DNA-binding region" description="H-T-H motif" evidence="1">
    <location>
        <begin position="23"/>
        <end position="42"/>
    </location>
</feature>
<dbReference type="EMBL" id="U33192">
    <property type="protein sequence ID" value="AAB06563.1"/>
    <property type="molecule type" value="Genomic_DNA"/>
</dbReference>
<dbReference type="RefSeq" id="WP_260380607.1">
    <property type="nucleotide sequence ID" value="NZ_CP104171.1"/>
</dbReference>
<dbReference type="SMR" id="P50328"/>
<dbReference type="GO" id="GO:0003677">
    <property type="term" value="F:DNA binding"/>
    <property type="evidence" value="ECO:0007669"/>
    <property type="project" value="UniProtKB-KW"/>
</dbReference>
<dbReference type="GO" id="GO:0003700">
    <property type="term" value="F:DNA-binding transcription factor activity"/>
    <property type="evidence" value="ECO:0007669"/>
    <property type="project" value="InterPro"/>
</dbReference>
<dbReference type="CDD" id="cd08462">
    <property type="entry name" value="PBP2_NodD"/>
    <property type="match status" value="1"/>
</dbReference>
<dbReference type="Gene3D" id="3.40.190.10">
    <property type="entry name" value="Periplasmic binding protein-like II"/>
    <property type="match status" value="2"/>
</dbReference>
<dbReference type="Gene3D" id="1.10.10.10">
    <property type="entry name" value="Winged helix-like DNA-binding domain superfamily/Winged helix DNA-binding domain"/>
    <property type="match status" value="1"/>
</dbReference>
<dbReference type="InterPro" id="IPR050389">
    <property type="entry name" value="LysR-type_TF"/>
</dbReference>
<dbReference type="InterPro" id="IPR005119">
    <property type="entry name" value="LysR_subst-bd"/>
</dbReference>
<dbReference type="InterPro" id="IPR037416">
    <property type="entry name" value="NodD_PBP2"/>
</dbReference>
<dbReference type="InterPro" id="IPR000847">
    <property type="entry name" value="Tscrpt_reg_HTH_LysR"/>
</dbReference>
<dbReference type="InterPro" id="IPR036388">
    <property type="entry name" value="WH-like_DNA-bd_sf"/>
</dbReference>
<dbReference type="InterPro" id="IPR036390">
    <property type="entry name" value="WH_DNA-bd_sf"/>
</dbReference>
<dbReference type="PANTHER" id="PTHR30118:SF6">
    <property type="entry name" value="HTH-TYPE TRANSCRIPTIONAL REGULATOR LEUO"/>
    <property type="match status" value="1"/>
</dbReference>
<dbReference type="PANTHER" id="PTHR30118">
    <property type="entry name" value="HTH-TYPE TRANSCRIPTIONAL REGULATOR LEUO-RELATED"/>
    <property type="match status" value="1"/>
</dbReference>
<dbReference type="Pfam" id="PF00126">
    <property type="entry name" value="HTH_1"/>
    <property type="match status" value="1"/>
</dbReference>
<dbReference type="Pfam" id="PF03466">
    <property type="entry name" value="LysR_substrate"/>
    <property type="match status" value="1"/>
</dbReference>
<dbReference type="PRINTS" id="PR00039">
    <property type="entry name" value="HTHLYSR"/>
</dbReference>
<dbReference type="SUPFAM" id="SSF53850">
    <property type="entry name" value="Periplasmic binding protein-like II"/>
    <property type="match status" value="1"/>
</dbReference>
<dbReference type="SUPFAM" id="SSF46785">
    <property type="entry name" value="Winged helix' DNA-binding domain"/>
    <property type="match status" value="1"/>
</dbReference>
<dbReference type="PROSITE" id="PS50931">
    <property type="entry name" value="HTH_LYSR"/>
    <property type="match status" value="1"/>
</dbReference>
<proteinExistence type="inferred from homology"/>
<evidence type="ECO:0000255" key="1">
    <source>
        <dbReference type="PROSITE-ProRule" id="PRU00253"/>
    </source>
</evidence>
<evidence type="ECO:0000305" key="2"/>